<organism>
    <name type="scientific">Guizotia abyssinica</name>
    <name type="common">Niger</name>
    <name type="synonym">Ramtilla</name>
    <dbReference type="NCBI Taxonomy" id="4230"/>
    <lineage>
        <taxon>Eukaryota</taxon>
        <taxon>Viridiplantae</taxon>
        <taxon>Streptophyta</taxon>
        <taxon>Embryophyta</taxon>
        <taxon>Tracheophyta</taxon>
        <taxon>Spermatophyta</taxon>
        <taxon>Magnoliopsida</taxon>
        <taxon>eudicotyledons</taxon>
        <taxon>Gunneridae</taxon>
        <taxon>Pentapetalae</taxon>
        <taxon>asterids</taxon>
        <taxon>campanulids</taxon>
        <taxon>Asterales</taxon>
        <taxon>Asteraceae</taxon>
        <taxon>Asteroideae</taxon>
        <taxon>Heliantheae alliance</taxon>
        <taxon>Millerieae</taxon>
        <taxon>Guizotia</taxon>
    </lineage>
</organism>
<reference key="1">
    <citation type="submission" date="2008-03" db="EMBL/GenBank/DDBJ databases">
        <title>Guizotia abyssinica chloroplast sequenced using Solexa.</title>
        <authorList>
            <person name="Kane N.C."/>
            <person name="Dempewolf H."/>
            <person name="Stewart M.L."/>
            <person name="Cronk Q."/>
            <person name="Rieseberrg L.H."/>
        </authorList>
    </citation>
    <scope>NUCLEOTIDE SEQUENCE [LARGE SCALE GENOMIC DNA]</scope>
    <source>
        <strain>cv. PI 508077</strain>
    </source>
</reference>
<sequence>MNVLSCSINTLNGLYDLSGVEVGQHFYWKIGGFQVHGQVLITSWVVIAILLGSATLAVRNPQTIPTGGQNFFEYVLEFIRDVSKTQIGEEYGPWVPFIGTMFLFIFVSNWSGALLPWKIIQLPHGELAAPTNDINTTVALALLTSVAYFYAGLTKKGLGYFGKYIQPTPILLPINILEDFTKPLSLSFRLFGKILADELVVVVLVSLVPSVVPIPVMFLGLFTSGIQALIFATLAAAYIGESMEGHH</sequence>
<dbReference type="EMBL" id="EU549769">
    <property type="protein sequence ID" value="ACB86518.1"/>
    <property type="molecule type" value="Genomic_DNA"/>
</dbReference>
<dbReference type="RefSeq" id="YP_001837351.1">
    <property type="nucleotide sequence ID" value="NC_010601.1"/>
</dbReference>
<dbReference type="SMR" id="B2LMI4"/>
<dbReference type="GeneID" id="6219179"/>
<dbReference type="GO" id="GO:0009535">
    <property type="term" value="C:chloroplast thylakoid membrane"/>
    <property type="evidence" value="ECO:0007669"/>
    <property type="project" value="UniProtKB-SubCell"/>
</dbReference>
<dbReference type="GO" id="GO:0005886">
    <property type="term" value="C:plasma membrane"/>
    <property type="evidence" value="ECO:0007669"/>
    <property type="project" value="UniProtKB-UniRule"/>
</dbReference>
<dbReference type="GO" id="GO:0045259">
    <property type="term" value="C:proton-transporting ATP synthase complex"/>
    <property type="evidence" value="ECO:0007669"/>
    <property type="project" value="UniProtKB-KW"/>
</dbReference>
<dbReference type="GO" id="GO:0046933">
    <property type="term" value="F:proton-transporting ATP synthase activity, rotational mechanism"/>
    <property type="evidence" value="ECO:0007669"/>
    <property type="project" value="UniProtKB-UniRule"/>
</dbReference>
<dbReference type="CDD" id="cd00310">
    <property type="entry name" value="ATP-synt_Fo_a_6"/>
    <property type="match status" value="1"/>
</dbReference>
<dbReference type="FunFam" id="1.20.120.220:FF:000001">
    <property type="entry name" value="ATP synthase subunit a, chloroplastic"/>
    <property type="match status" value="1"/>
</dbReference>
<dbReference type="Gene3D" id="1.20.120.220">
    <property type="entry name" value="ATP synthase, F0 complex, subunit A"/>
    <property type="match status" value="1"/>
</dbReference>
<dbReference type="HAMAP" id="MF_01393">
    <property type="entry name" value="ATP_synth_a_bact"/>
    <property type="match status" value="1"/>
</dbReference>
<dbReference type="InterPro" id="IPR045082">
    <property type="entry name" value="ATP_syn_F0_a_bact/chloroplast"/>
</dbReference>
<dbReference type="InterPro" id="IPR000568">
    <property type="entry name" value="ATP_synth_F0_asu"/>
</dbReference>
<dbReference type="InterPro" id="IPR035908">
    <property type="entry name" value="F0_ATP_A_sf"/>
</dbReference>
<dbReference type="NCBIfam" id="TIGR01131">
    <property type="entry name" value="ATP_synt_6_or_A"/>
    <property type="match status" value="1"/>
</dbReference>
<dbReference type="PANTHER" id="PTHR42823">
    <property type="entry name" value="ATP SYNTHASE SUBUNIT A, CHLOROPLASTIC"/>
    <property type="match status" value="1"/>
</dbReference>
<dbReference type="PANTHER" id="PTHR42823:SF3">
    <property type="entry name" value="ATP SYNTHASE SUBUNIT A, CHLOROPLASTIC"/>
    <property type="match status" value="1"/>
</dbReference>
<dbReference type="Pfam" id="PF00119">
    <property type="entry name" value="ATP-synt_A"/>
    <property type="match status" value="1"/>
</dbReference>
<dbReference type="PRINTS" id="PR00123">
    <property type="entry name" value="ATPASEA"/>
</dbReference>
<dbReference type="SUPFAM" id="SSF81336">
    <property type="entry name" value="F1F0 ATP synthase subunit A"/>
    <property type="match status" value="1"/>
</dbReference>
<name>ATPI_GUIAB</name>
<geneLocation type="chloroplast"/>
<keyword id="KW-0066">ATP synthesis</keyword>
<keyword id="KW-0138">CF(0)</keyword>
<keyword id="KW-0150">Chloroplast</keyword>
<keyword id="KW-0375">Hydrogen ion transport</keyword>
<keyword id="KW-0406">Ion transport</keyword>
<keyword id="KW-0472">Membrane</keyword>
<keyword id="KW-0934">Plastid</keyword>
<keyword id="KW-0793">Thylakoid</keyword>
<keyword id="KW-0812">Transmembrane</keyword>
<keyword id="KW-1133">Transmembrane helix</keyword>
<keyword id="KW-0813">Transport</keyword>
<proteinExistence type="inferred from homology"/>
<gene>
    <name evidence="1" type="primary">atpI</name>
    <name type="ordered locus">GuabCp012</name>
</gene>
<comment type="function">
    <text evidence="1">Key component of the proton channel; it plays a direct role in the translocation of protons across the membrane.</text>
</comment>
<comment type="subunit">
    <text evidence="1">F-type ATPases have 2 components, CF(1) - the catalytic core - and CF(0) - the membrane proton channel. CF(1) has five subunits: alpha(3), beta(3), gamma(1), delta(1), epsilon(1). CF(0) has four main subunits: a, b, b' and c.</text>
</comment>
<comment type="subcellular location">
    <subcellularLocation>
        <location evidence="1">Plastid</location>
        <location evidence="1">Chloroplast thylakoid membrane</location>
        <topology evidence="1">Multi-pass membrane protein</topology>
    </subcellularLocation>
</comment>
<comment type="similarity">
    <text evidence="1">Belongs to the ATPase A chain family.</text>
</comment>
<accession>B2LMI4</accession>
<protein>
    <recommendedName>
        <fullName evidence="1">ATP synthase subunit a, chloroplastic</fullName>
    </recommendedName>
    <alternativeName>
        <fullName evidence="1">ATP synthase F0 sector subunit a</fullName>
    </alternativeName>
    <alternativeName>
        <fullName evidence="1">F-ATPase subunit IV</fullName>
    </alternativeName>
</protein>
<evidence type="ECO:0000255" key="1">
    <source>
        <dbReference type="HAMAP-Rule" id="MF_01393"/>
    </source>
</evidence>
<feature type="chain" id="PRO_0000362559" description="ATP synthase subunit a, chloroplastic">
    <location>
        <begin position="1"/>
        <end position="247"/>
    </location>
</feature>
<feature type="transmembrane region" description="Helical" evidence="1">
    <location>
        <begin position="38"/>
        <end position="58"/>
    </location>
</feature>
<feature type="transmembrane region" description="Helical" evidence="1">
    <location>
        <begin position="95"/>
        <end position="115"/>
    </location>
</feature>
<feature type="transmembrane region" description="Helical" evidence="1">
    <location>
        <begin position="134"/>
        <end position="154"/>
    </location>
</feature>
<feature type="transmembrane region" description="Helical" evidence="1">
    <location>
        <begin position="199"/>
        <end position="219"/>
    </location>
</feature>
<feature type="transmembrane region" description="Helical" evidence="1">
    <location>
        <begin position="220"/>
        <end position="240"/>
    </location>
</feature>